<comment type="function">
    <text evidence="2">Involved in the translocation of tetra- and pentapeptides across the cellular membrane in an energy-dependent manner.</text>
</comment>
<comment type="subcellular location">
    <subcellularLocation>
        <location evidence="3">Membrane</location>
        <topology evidence="3">Multi-pass membrane protein</topology>
    </subcellularLocation>
</comment>
<comment type="tissue specificity">
    <text evidence="2">Highly expressed in flowers, and moderately expressed in leaves and stems.</text>
</comment>
<comment type="similarity">
    <text evidence="3">Belongs to the oligopeptide OPT transporter (TC 2.A.67.1) family.</text>
</comment>
<proteinExistence type="evidence at transcript level"/>
<accession>Q9FG72</accession>
<name>OPT1_ARATH</name>
<feature type="chain" id="PRO_0000213778" description="Oligopeptide transporter 1">
    <location>
        <begin position="1"/>
        <end position="755"/>
    </location>
</feature>
<feature type="transmembrane region" description="Helical" evidence="1">
    <location>
        <begin position="58"/>
        <end position="78"/>
    </location>
</feature>
<feature type="transmembrane region" description="Helical" evidence="1">
    <location>
        <begin position="82"/>
        <end position="102"/>
    </location>
</feature>
<feature type="transmembrane region" description="Helical" evidence="1">
    <location>
        <begin position="134"/>
        <end position="154"/>
    </location>
</feature>
<feature type="transmembrane region" description="Helical" evidence="1">
    <location>
        <begin position="165"/>
        <end position="185"/>
    </location>
</feature>
<feature type="transmembrane region" description="Helical" evidence="1">
    <location>
        <begin position="226"/>
        <end position="246"/>
    </location>
</feature>
<feature type="transmembrane region" description="Helical" evidence="1">
    <location>
        <begin position="298"/>
        <end position="318"/>
    </location>
</feature>
<feature type="transmembrane region" description="Helical" evidence="1">
    <location>
        <begin position="370"/>
        <end position="390"/>
    </location>
</feature>
<feature type="transmembrane region" description="Helical" evidence="1">
    <location>
        <begin position="434"/>
        <end position="454"/>
    </location>
</feature>
<feature type="transmembrane region" description="Helical" evidence="1">
    <location>
        <begin position="462"/>
        <end position="482"/>
    </location>
</feature>
<feature type="transmembrane region" description="Helical" evidence="1">
    <location>
        <begin position="546"/>
        <end position="566"/>
    </location>
</feature>
<feature type="transmembrane region" description="Helical" evidence="1">
    <location>
        <begin position="614"/>
        <end position="634"/>
    </location>
</feature>
<feature type="transmembrane region" description="Helical" evidence="1">
    <location>
        <begin position="664"/>
        <end position="684"/>
    </location>
</feature>
<feature type="transmembrane region" description="Helical" evidence="1">
    <location>
        <begin position="697"/>
        <end position="717"/>
    </location>
</feature>
<gene>
    <name type="primary">OPT1</name>
    <name type="ordered locus">At5g55930</name>
    <name type="ORF">MYN21.4</name>
</gene>
<keyword id="KW-0472">Membrane</keyword>
<keyword id="KW-0571">Peptide transport</keyword>
<keyword id="KW-0653">Protein transport</keyword>
<keyword id="KW-1185">Reference proteome</keyword>
<keyword id="KW-0812">Transmembrane</keyword>
<keyword id="KW-1133">Transmembrane helix</keyword>
<keyword id="KW-0813">Transport</keyword>
<dbReference type="EMBL" id="AB026659">
    <property type="protein sequence ID" value="BAB08658.1"/>
    <property type="molecule type" value="Genomic_DNA"/>
</dbReference>
<dbReference type="EMBL" id="CP002688">
    <property type="protein sequence ID" value="AED96700.1"/>
    <property type="molecule type" value="Genomic_DNA"/>
</dbReference>
<dbReference type="EMBL" id="AY070725">
    <property type="protein sequence ID" value="AAL50067.1"/>
    <property type="molecule type" value="mRNA"/>
</dbReference>
<dbReference type="EMBL" id="BT004528">
    <property type="protein sequence ID" value="AAO42774.1"/>
    <property type="molecule type" value="mRNA"/>
</dbReference>
<dbReference type="RefSeq" id="NP_200404.1">
    <property type="nucleotide sequence ID" value="NM_124975.4"/>
</dbReference>
<dbReference type="BioGRID" id="20935">
    <property type="interactions" value="24"/>
</dbReference>
<dbReference type="FunCoup" id="Q9FG72">
    <property type="interactions" value="163"/>
</dbReference>
<dbReference type="IntAct" id="Q9FG72">
    <property type="interactions" value="24"/>
</dbReference>
<dbReference type="STRING" id="3702.Q9FG72"/>
<dbReference type="PaxDb" id="3702-AT5G55930.1"/>
<dbReference type="ProteomicsDB" id="248764"/>
<dbReference type="EnsemblPlants" id="AT5G55930.1">
    <property type="protein sequence ID" value="AT5G55930.1"/>
    <property type="gene ID" value="AT5G55930"/>
</dbReference>
<dbReference type="GeneID" id="835691"/>
<dbReference type="Gramene" id="AT5G55930.1">
    <property type="protein sequence ID" value="AT5G55930.1"/>
    <property type="gene ID" value="AT5G55930"/>
</dbReference>
<dbReference type="KEGG" id="ath:AT5G55930"/>
<dbReference type="Araport" id="AT5G55930"/>
<dbReference type="TAIR" id="AT5G55930">
    <property type="gene designation" value="OPT1"/>
</dbReference>
<dbReference type="eggNOG" id="KOG2262">
    <property type="taxonomic scope" value="Eukaryota"/>
</dbReference>
<dbReference type="HOGENOM" id="CLU_004965_1_1_1"/>
<dbReference type="InParanoid" id="Q9FG72"/>
<dbReference type="OMA" id="EVWHTGL"/>
<dbReference type="OrthoDB" id="9986677at2759"/>
<dbReference type="PhylomeDB" id="Q9FG72"/>
<dbReference type="PRO" id="PR:Q9FG72"/>
<dbReference type="Proteomes" id="UP000006548">
    <property type="component" value="Chromosome 5"/>
</dbReference>
<dbReference type="ExpressionAtlas" id="Q9FG72">
    <property type="expression patterns" value="baseline and differential"/>
</dbReference>
<dbReference type="GO" id="GO:0016020">
    <property type="term" value="C:membrane"/>
    <property type="evidence" value="ECO:0000250"/>
    <property type="project" value="TAIR"/>
</dbReference>
<dbReference type="GO" id="GO:0035673">
    <property type="term" value="F:oligopeptide transmembrane transporter activity"/>
    <property type="evidence" value="ECO:0007669"/>
    <property type="project" value="InterPro"/>
</dbReference>
<dbReference type="GO" id="GO:0015031">
    <property type="term" value="P:protein transport"/>
    <property type="evidence" value="ECO:0007669"/>
    <property type="project" value="UniProtKB-KW"/>
</dbReference>
<dbReference type="InterPro" id="IPR004648">
    <property type="entry name" value="Oligpept_transpt"/>
</dbReference>
<dbReference type="InterPro" id="IPR004813">
    <property type="entry name" value="OPT"/>
</dbReference>
<dbReference type="NCBIfam" id="TIGR00727">
    <property type="entry name" value="ISP4_OPT"/>
    <property type="match status" value="1"/>
</dbReference>
<dbReference type="NCBIfam" id="TIGR00728">
    <property type="entry name" value="OPT_sfam"/>
    <property type="match status" value="1"/>
</dbReference>
<dbReference type="PANTHER" id="PTHR22601">
    <property type="entry name" value="ISP4 LIKE PROTEIN"/>
    <property type="match status" value="1"/>
</dbReference>
<dbReference type="Pfam" id="PF03169">
    <property type="entry name" value="OPT"/>
    <property type="match status" value="1"/>
</dbReference>
<organism>
    <name type="scientific">Arabidopsis thaliana</name>
    <name type="common">Mouse-ear cress</name>
    <dbReference type="NCBI Taxonomy" id="3702"/>
    <lineage>
        <taxon>Eukaryota</taxon>
        <taxon>Viridiplantae</taxon>
        <taxon>Streptophyta</taxon>
        <taxon>Embryophyta</taxon>
        <taxon>Tracheophyta</taxon>
        <taxon>Spermatophyta</taxon>
        <taxon>Magnoliopsida</taxon>
        <taxon>eudicotyledons</taxon>
        <taxon>Gunneridae</taxon>
        <taxon>Pentapetalae</taxon>
        <taxon>rosids</taxon>
        <taxon>malvids</taxon>
        <taxon>Brassicales</taxon>
        <taxon>Brassicaceae</taxon>
        <taxon>Camelineae</taxon>
        <taxon>Arabidopsis</taxon>
    </lineage>
</organism>
<reference key="1">
    <citation type="submission" date="1999-04" db="EMBL/GenBank/DDBJ databases">
        <title>Structural analysis of Arabidopsis thaliana chromosome 5. XI.</title>
        <authorList>
            <person name="Kaneko T."/>
            <person name="Katoh T."/>
            <person name="Asamizu E."/>
            <person name="Sato S."/>
            <person name="Nakamura Y."/>
            <person name="Kotani H."/>
            <person name="Tabata S."/>
        </authorList>
    </citation>
    <scope>NUCLEOTIDE SEQUENCE [LARGE SCALE GENOMIC DNA]</scope>
    <source>
        <strain>cv. Columbia</strain>
    </source>
</reference>
<reference key="2">
    <citation type="journal article" date="2017" name="Plant J.">
        <title>Araport11: a complete reannotation of the Arabidopsis thaliana reference genome.</title>
        <authorList>
            <person name="Cheng C.Y."/>
            <person name="Krishnakumar V."/>
            <person name="Chan A.P."/>
            <person name="Thibaud-Nissen F."/>
            <person name="Schobel S."/>
            <person name="Town C.D."/>
        </authorList>
    </citation>
    <scope>GENOME REANNOTATION</scope>
    <source>
        <strain>cv. Columbia</strain>
    </source>
</reference>
<reference key="3">
    <citation type="journal article" date="2003" name="Science">
        <title>Empirical analysis of transcriptional activity in the Arabidopsis genome.</title>
        <authorList>
            <person name="Yamada K."/>
            <person name="Lim J."/>
            <person name="Dale J.M."/>
            <person name="Chen H."/>
            <person name="Shinn P."/>
            <person name="Palm C.J."/>
            <person name="Southwick A.M."/>
            <person name="Wu H.C."/>
            <person name="Kim C.J."/>
            <person name="Nguyen M."/>
            <person name="Pham P.K."/>
            <person name="Cheuk R.F."/>
            <person name="Karlin-Newmann G."/>
            <person name="Liu S.X."/>
            <person name="Lam B."/>
            <person name="Sakano H."/>
            <person name="Wu T."/>
            <person name="Yu G."/>
            <person name="Miranda M."/>
            <person name="Quach H.L."/>
            <person name="Tripp M."/>
            <person name="Chang C.H."/>
            <person name="Lee J.M."/>
            <person name="Toriumi M.J."/>
            <person name="Chan M.M."/>
            <person name="Tang C.C."/>
            <person name="Onodera C.S."/>
            <person name="Deng J.M."/>
            <person name="Akiyama K."/>
            <person name="Ansari Y."/>
            <person name="Arakawa T."/>
            <person name="Banh J."/>
            <person name="Banno F."/>
            <person name="Bowser L."/>
            <person name="Brooks S.Y."/>
            <person name="Carninci P."/>
            <person name="Chao Q."/>
            <person name="Choy N."/>
            <person name="Enju A."/>
            <person name="Goldsmith A.D."/>
            <person name="Gurjal M."/>
            <person name="Hansen N.F."/>
            <person name="Hayashizaki Y."/>
            <person name="Johnson-Hopson C."/>
            <person name="Hsuan V.W."/>
            <person name="Iida K."/>
            <person name="Karnes M."/>
            <person name="Khan S."/>
            <person name="Koesema E."/>
            <person name="Ishida J."/>
            <person name="Jiang P.X."/>
            <person name="Jones T."/>
            <person name="Kawai J."/>
            <person name="Kamiya A."/>
            <person name="Meyers C."/>
            <person name="Nakajima M."/>
            <person name="Narusaka M."/>
            <person name="Seki M."/>
            <person name="Sakurai T."/>
            <person name="Satou M."/>
            <person name="Tamse R."/>
            <person name="Vaysberg M."/>
            <person name="Wallender E.K."/>
            <person name="Wong C."/>
            <person name="Yamamura Y."/>
            <person name="Yuan S."/>
            <person name="Shinozaki K."/>
            <person name="Davis R.W."/>
            <person name="Theologis A."/>
            <person name="Ecker J.R."/>
        </authorList>
    </citation>
    <scope>NUCLEOTIDE SEQUENCE [LARGE SCALE MRNA]</scope>
    <source>
        <strain>cv. Columbia</strain>
    </source>
</reference>
<reference key="4">
    <citation type="journal article" date="2002" name="Plant Physiol.">
        <title>An oligopeptide transporter gene family in Arabidopsis.</title>
        <authorList>
            <person name="Koh S."/>
            <person name="Wiles A.M."/>
            <person name="Sharp J.S."/>
            <person name="Naider F.R."/>
            <person name="Becker J.M."/>
            <person name="Stacey G."/>
        </authorList>
    </citation>
    <scope>FUNCTION</scope>
    <scope>NOMENCLATURE</scope>
    <scope>TISSUE SPECIFICITY</scope>
</reference>
<sequence>MTSVFDEHKPSDDSHESKIVINGEEEVLEEENDNPIEEVRLTVPITDDPTLPVLTFRTWTLGLFSCILLAFVNQFFGFRSNQLWVSSVAAQIVTLPLGKLMAKTLPTKKFGFPGTNWSWSFNPGPFNMKEHVLITIFANTGAGGVYATSIITIVKAFYNRQLNVAAAMLLTQTTQLLGYGWAGIFRKFLVDSPYMWWPSNLVQVSLFRALHEKEDLQKGQQTRFRFFIIVFCVSFAYYIIPGYLFPSISAISFVCWIWKSSVTAQIVGSGLKGLGIGSFGLDWSTVAGFLGSPLAVPFFAIANFFGGFFIFLYIVLPIFYWTNAYDAQKFPFYTSHTFDQTGHTYNITRILNEKNFDINLDAYNGYSKLYLSVMFALLYGLSFGSLCATISHVALYDGKFIWGMWKKAKTATKDKYGDVHSRLMKKNYQSVPQWWFIAVLVISFAFALYACEGFDKQLQLPWWGLILACAIALFFTLPIGVIQATTNQQMGLNVITELIIGYLYPGKPLANVAFKTYGYISMSQALYFVGDFKLGHYMKIPPRSMFIVQLVATVVASTVCFGTTWWLITSVENICNVDLLPVGSPWTCPGDEVFYNASIIWGVIGPGRMFTKEGIYPGMNWFFLIGLLAPVPFWYLSKKFPEKKWLKQIHVPLIFSAVSAMPQAKAVHYWSWAIVGVVFNYYIFRRFKTWWARHNYILSAALDAGTAIMGVLIFFAFQNNDISLPDWWGLENSDHCPLAHCPLAKGVVVEGCPVF</sequence>
<evidence type="ECO:0000255" key="1"/>
<evidence type="ECO:0000269" key="2">
    <source>
    </source>
</evidence>
<evidence type="ECO:0000305" key="3"/>
<protein>
    <recommendedName>
        <fullName>Oligopeptide transporter 1</fullName>
        <shortName>AtOPT1</shortName>
    </recommendedName>
</protein>